<accession>Q07Y17</accession>
<sequence>MQNQGNKVLSAAMLDSADRYWLRLCDVWPEAKTALTAMQQQELTAVFGLSDYMGEQLCRHPEWIVQLFDGLLDDVVRSEFDAQLHSLIADLTQEELVKSALRRYRNLQMVRLAWRDFLNYTPVEESLLDLSALAEALVIAGRDWLYQEMCQQYGTPTSAEGNPQPLLILGMGKLGGRELNFSSDIDLIFTFPEHGETVGGRRTQANQQFFIRMGQRLVNLLDQVTVDGFVFRVDMRLRPYGESGPLVVSFSGLEDYYQEQGRDWERYAMVKARVLGPWSGYCDELHDLLRPFVYRRYIDFSAIESLRKMKQLIAQEVRRRQLTDNIKLGAGGIREVEFVVQSFQLIRGGREPALRQQSLFGAIDTLYSLGQLEYLAVDELKHSYIILRRVENLLQAIDDKQTQTLPNNELDWQRLCYPLDMADEVELRQKINQAMVTIHGHFNATVGGTDSHEHNDHWTALFWNVQQDEHANALLQEQQVDDAELWQLLSEWRQTVSKRSIGPRGRETLDKLMPKLLEELVTQTKPSQAFKPVAKVLDKILTRTTYLELLCENPGARQQLVSLCCASPWIARELANFPMLLDELIDPSQLYDITSIDDYPSELRQYLLRVPEDDMEQQMEALRQFKLSQQLKIAAADVTGVLPVMQVSDHLTFLAEAIIEQVVLQAWHQVASRHGIPAETSPSNMGFAVIGYGKLGGIELGYGSDLDLVFLHGHTGSGTTDGKRPIDNGHFYLKLAQRIVHLFATRTTSGELYEVDMRLRPSGASGLLVSEIEHFGAYLQQEAWTWEHQALVRSRFVFGDYSLAGRFSDLRAQVLKIERDKQVLAKAVKDMRIKMREHLLQVEPGQFDLKQSAGGIADIEFIAQYLVLANAHQYHELTIWSDNVRIFEVLAELELLPIMQAQHLTQTYCWLRDENHELTLQQLPGKLPIQSVLQKTDSVIEIYNEILAI</sequence>
<name>GLNE_SHEFN</name>
<comment type="function">
    <text evidence="1">Involved in the regulation of glutamine synthetase GlnA, a key enzyme in the process to assimilate ammonia. When cellular nitrogen levels are high, the C-terminal adenylyl transferase (AT) inactivates GlnA by covalent transfer of an adenylyl group from ATP to specific tyrosine residue of GlnA, thus reducing its activity. Conversely, when nitrogen levels are low, the N-terminal adenylyl removase (AR) activates GlnA by removing the adenylyl group by phosphorolysis, increasing its activity. The regulatory region of GlnE binds the signal transduction protein PII (GlnB) which indicates the nitrogen status of the cell.</text>
</comment>
<comment type="catalytic activity">
    <reaction evidence="1">
        <text>[glutamine synthetase]-O(4)-(5'-adenylyl)-L-tyrosine + phosphate = [glutamine synthetase]-L-tyrosine + ADP</text>
        <dbReference type="Rhea" id="RHEA:43716"/>
        <dbReference type="Rhea" id="RHEA-COMP:10660"/>
        <dbReference type="Rhea" id="RHEA-COMP:10661"/>
        <dbReference type="ChEBI" id="CHEBI:43474"/>
        <dbReference type="ChEBI" id="CHEBI:46858"/>
        <dbReference type="ChEBI" id="CHEBI:83624"/>
        <dbReference type="ChEBI" id="CHEBI:456216"/>
        <dbReference type="EC" id="2.7.7.89"/>
    </reaction>
</comment>
<comment type="catalytic activity">
    <reaction evidence="1">
        <text>[glutamine synthetase]-L-tyrosine + ATP = [glutamine synthetase]-O(4)-(5'-adenylyl)-L-tyrosine + diphosphate</text>
        <dbReference type="Rhea" id="RHEA:18589"/>
        <dbReference type="Rhea" id="RHEA-COMP:10660"/>
        <dbReference type="Rhea" id="RHEA-COMP:10661"/>
        <dbReference type="ChEBI" id="CHEBI:30616"/>
        <dbReference type="ChEBI" id="CHEBI:33019"/>
        <dbReference type="ChEBI" id="CHEBI:46858"/>
        <dbReference type="ChEBI" id="CHEBI:83624"/>
        <dbReference type="EC" id="2.7.7.42"/>
    </reaction>
</comment>
<comment type="cofactor">
    <cofactor evidence="1">
        <name>Mg(2+)</name>
        <dbReference type="ChEBI" id="CHEBI:18420"/>
    </cofactor>
</comment>
<comment type="similarity">
    <text evidence="1">Belongs to the GlnE family.</text>
</comment>
<protein>
    <recommendedName>
        <fullName evidence="1">Bifunctional glutamine synthetase adenylyltransferase/adenylyl-removing enzyme</fullName>
    </recommendedName>
    <alternativeName>
        <fullName evidence="1">ATP:glutamine synthetase adenylyltransferase</fullName>
    </alternativeName>
    <alternativeName>
        <fullName evidence="1">ATase</fullName>
    </alternativeName>
    <domain>
        <recommendedName>
            <fullName evidence="1">Glutamine synthetase adenylyl-L-tyrosine phosphorylase</fullName>
            <ecNumber evidence="1">2.7.7.89</ecNumber>
        </recommendedName>
        <alternativeName>
            <fullName evidence="1">Adenylyl removase</fullName>
            <shortName evidence="1">AR</shortName>
            <shortName evidence="1">AT-N</shortName>
        </alternativeName>
    </domain>
    <domain>
        <recommendedName>
            <fullName evidence="1">Glutamine synthetase adenylyl transferase</fullName>
            <ecNumber evidence="1">2.7.7.42</ecNumber>
        </recommendedName>
        <alternativeName>
            <fullName evidence="1">Adenylyl transferase</fullName>
            <shortName evidence="1">AT</shortName>
            <shortName evidence="1">AT-C</shortName>
        </alternativeName>
    </domain>
</protein>
<gene>
    <name evidence="1" type="primary">glnE</name>
    <name type="ordered locus">Sfri_3261</name>
</gene>
<organism>
    <name type="scientific">Shewanella frigidimarina (strain NCIMB 400)</name>
    <dbReference type="NCBI Taxonomy" id="318167"/>
    <lineage>
        <taxon>Bacteria</taxon>
        <taxon>Pseudomonadati</taxon>
        <taxon>Pseudomonadota</taxon>
        <taxon>Gammaproteobacteria</taxon>
        <taxon>Alteromonadales</taxon>
        <taxon>Shewanellaceae</taxon>
        <taxon>Shewanella</taxon>
    </lineage>
</organism>
<feature type="chain" id="PRO_1000133919" description="Bifunctional glutamine synthetase adenylyltransferase/adenylyl-removing enzyme">
    <location>
        <begin position="1"/>
        <end position="949"/>
    </location>
</feature>
<feature type="region of interest" description="Adenylyl removase" evidence="1">
    <location>
        <begin position="1"/>
        <end position="450"/>
    </location>
</feature>
<feature type="region of interest" description="Adenylyl transferase" evidence="1">
    <location>
        <begin position="455"/>
        <end position="949"/>
    </location>
</feature>
<evidence type="ECO:0000255" key="1">
    <source>
        <dbReference type="HAMAP-Rule" id="MF_00802"/>
    </source>
</evidence>
<reference key="1">
    <citation type="submission" date="2006-08" db="EMBL/GenBank/DDBJ databases">
        <title>Complete sequence of Shewanella frigidimarina NCIMB 400.</title>
        <authorList>
            <consortium name="US DOE Joint Genome Institute"/>
            <person name="Copeland A."/>
            <person name="Lucas S."/>
            <person name="Lapidus A."/>
            <person name="Barry K."/>
            <person name="Detter J.C."/>
            <person name="Glavina del Rio T."/>
            <person name="Hammon N."/>
            <person name="Israni S."/>
            <person name="Dalin E."/>
            <person name="Tice H."/>
            <person name="Pitluck S."/>
            <person name="Fredrickson J.K."/>
            <person name="Kolker E."/>
            <person name="McCuel L.A."/>
            <person name="DiChristina T."/>
            <person name="Nealson K.H."/>
            <person name="Newman D."/>
            <person name="Tiedje J.M."/>
            <person name="Zhou J."/>
            <person name="Romine M.F."/>
            <person name="Culley D.E."/>
            <person name="Serres M."/>
            <person name="Chertkov O."/>
            <person name="Brettin T."/>
            <person name="Bruce D."/>
            <person name="Han C."/>
            <person name="Tapia R."/>
            <person name="Gilna P."/>
            <person name="Schmutz J."/>
            <person name="Larimer F."/>
            <person name="Land M."/>
            <person name="Hauser L."/>
            <person name="Kyrpides N."/>
            <person name="Mikhailova N."/>
            <person name="Richardson P."/>
        </authorList>
    </citation>
    <scope>NUCLEOTIDE SEQUENCE [LARGE SCALE GENOMIC DNA]</scope>
    <source>
        <strain>NCIMB 400</strain>
    </source>
</reference>
<dbReference type="EC" id="2.7.7.89" evidence="1"/>
<dbReference type="EC" id="2.7.7.42" evidence="1"/>
<dbReference type="EMBL" id="CP000447">
    <property type="protein sequence ID" value="ABI73097.1"/>
    <property type="molecule type" value="Genomic_DNA"/>
</dbReference>
<dbReference type="RefSeq" id="WP_011638700.1">
    <property type="nucleotide sequence ID" value="NC_008345.1"/>
</dbReference>
<dbReference type="SMR" id="Q07Y17"/>
<dbReference type="STRING" id="318167.Sfri_3261"/>
<dbReference type="KEGG" id="sfr:Sfri_3261"/>
<dbReference type="eggNOG" id="COG1391">
    <property type="taxonomic scope" value="Bacteria"/>
</dbReference>
<dbReference type="HOGENOM" id="CLU_006233_0_1_6"/>
<dbReference type="OrthoDB" id="9759366at2"/>
<dbReference type="Proteomes" id="UP000000684">
    <property type="component" value="Chromosome"/>
</dbReference>
<dbReference type="GO" id="GO:0005829">
    <property type="term" value="C:cytosol"/>
    <property type="evidence" value="ECO:0007669"/>
    <property type="project" value="TreeGrafter"/>
</dbReference>
<dbReference type="GO" id="GO:0008882">
    <property type="term" value="F:[glutamate-ammonia-ligase] adenylyltransferase activity"/>
    <property type="evidence" value="ECO:0007669"/>
    <property type="project" value="UniProtKB-UniRule"/>
</dbReference>
<dbReference type="GO" id="GO:0047388">
    <property type="term" value="F:[glutamine synthetase]-adenylyl-L-tyrosine phosphorylase activity"/>
    <property type="evidence" value="ECO:0007669"/>
    <property type="project" value="UniProtKB-EC"/>
</dbReference>
<dbReference type="GO" id="GO:0005524">
    <property type="term" value="F:ATP binding"/>
    <property type="evidence" value="ECO:0007669"/>
    <property type="project" value="UniProtKB-UniRule"/>
</dbReference>
<dbReference type="GO" id="GO:0000287">
    <property type="term" value="F:magnesium ion binding"/>
    <property type="evidence" value="ECO:0007669"/>
    <property type="project" value="UniProtKB-UniRule"/>
</dbReference>
<dbReference type="GO" id="GO:0000820">
    <property type="term" value="P:regulation of glutamine family amino acid metabolic process"/>
    <property type="evidence" value="ECO:0007669"/>
    <property type="project" value="UniProtKB-UniRule"/>
</dbReference>
<dbReference type="CDD" id="cd05401">
    <property type="entry name" value="NT_GlnE_GlnD_like"/>
    <property type="match status" value="2"/>
</dbReference>
<dbReference type="FunFam" id="1.20.120.1510:FF:000001">
    <property type="entry name" value="Bifunctional glutamine synthetase adenylyltransferase/adenylyl-removing enzyme"/>
    <property type="match status" value="1"/>
</dbReference>
<dbReference type="FunFam" id="1.20.120.330:FF:000005">
    <property type="entry name" value="Bifunctional glutamine synthetase adenylyltransferase/adenylyl-removing enzyme"/>
    <property type="match status" value="1"/>
</dbReference>
<dbReference type="FunFam" id="3.30.460.10:FF:000009">
    <property type="entry name" value="Bifunctional glutamine synthetase adenylyltransferase/adenylyl-removing enzyme"/>
    <property type="match status" value="1"/>
</dbReference>
<dbReference type="FunFam" id="3.30.460.10:FF:000014">
    <property type="entry name" value="Bifunctional glutamine synthetase adenylyltransferase/adenylyl-removing enzyme"/>
    <property type="match status" value="1"/>
</dbReference>
<dbReference type="Gene3D" id="1.20.120.1510">
    <property type="match status" value="1"/>
</dbReference>
<dbReference type="Gene3D" id="3.30.460.10">
    <property type="entry name" value="Beta Polymerase, domain 2"/>
    <property type="match status" value="2"/>
</dbReference>
<dbReference type="Gene3D" id="1.10.4050.10">
    <property type="entry name" value="Glutamine synthase adenylyltransferase GlnE"/>
    <property type="match status" value="1"/>
</dbReference>
<dbReference type="Gene3D" id="1.20.120.330">
    <property type="entry name" value="Nucleotidyltransferases domain 2"/>
    <property type="match status" value="2"/>
</dbReference>
<dbReference type="HAMAP" id="MF_00802">
    <property type="entry name" value="GlnE"/>
    <property type="match status" value="1"/>
</dbReference>
<dbReference type="InterPro" id="IPR023057">
    <property type="entry name" value="GlnE"/>
</dbReference>
<dbReference type="InterPro" id="IPR005190">
    <property type="entry name" value="GlnE_rpt_dom"/>
</dbReference>
<dbReference type="InterPro" id="IPR043519">
    <property type="entry name" value="NT_sf"/>
</dbReference>
<dbReference type="InterPro" id="IPR013546">
    <property type="entry name" value="PII_UdlTrfase/GS_AdlTrfase"/>
</dbReference>
<dbReference type="NCBIfam" id="NF008292">
    <property type="entry name" value="PRK11072.1"/>
    <property type="match status" value="1"/>
</dbReference>
<dbReference type="PANTHER" id="PTHR30621:SF0">
    <property type="entry name" value="BIFUNCTIONAL GLUTAMINE SYNTHETASE ADENYLYLTRANSFERASE_ADENYLYL-REMOVING ENZYME"/>
    <property type="match status" value="1"/>
</dbReference>
<dbReference type="PANTHER" id="PTHR30621">
    <property type="entry name" value="GLUTAMINE SYNTHETASE ADENYLYLTRANSFERASE"/>
    <property type="match status" value="1"/>
</dbReference>
<dbReference type="Pfam" id="PF08335">
    <property type="entry name" value="GlnD_UR_UTase"/>
    <property type="match status" value="2"/>
</dbReference>
<dbReference type="Pfam" id="PF03710">
    <property type="entry name" value="GlnE"/>
    <property type="match status" value="2"/>
</dbReference>
<dbReference type="SUPFAM" id="SSF81301">
    <property type="entry name" value="Nucleotidyltransferase"/>
    <property type="match status" value="2"/>
</dbReference>
<dbReference type="SUPFAM" id="SSF81593">
    <property type="entry name" value="Nucleotidyltransferase substrate binding subunit/domain"/>
    <property type="match status" value="2"/>
</dbReference>
<keyword id="KW-0067">ATP-binding</keyword>
<keyword id="KW-0460">Magnesium</keyword>
<keyword id="KW-0511">Multifunctional enzyme</keyword>
<keyword id="KW-0547">Nucleotide-binding</keyword>
<keyword id="KW-0548">Nucleotidyltransferase</keyword>
<keyword id="KW-1185">Reference proteome</keyword>
<keyword id="KW-0808">Transferase</keyword>
<proteinExistence type="inferred from homology"/>